<comment type="function">
    <text evidence="1">Plays an important role in DNA replication, recombination and repair. Binds to ssDNA and to an array of partner proteins to recruit them to their sites of action during DNA metabolism.</text>
</comment>
<comment type="subunit">
    <text evidence="1">Homotetramer.</text>
</comment>
<dbReference type="EMBL" id="AJ235273">
    <property type="protein sequence ID" value="CAA15261.1"/>
    <property type="molecule type" value="Genomic_DNA"/>
</dbReference>
<dbReference type="PIR" id="E71645">
    <property type="entry name" value="E71645"/>
</dbReference>
<dbReference type="RefSeq" id="NP_221185.1">
    <property type="nucleotide sequence ID" value="NC_000963.1"/>
</dbReference>
<dbReference type="RefSeq" id="WP_004596816.1">
    <property type="nucleotide sequence ID" value="NC_000963.1"/>
</dbReference>
<dbReference type="SMR" id="Q9ZCC2"/>
<dbReference type="STRING" id="272947.gene:17555905"/>
<dbReference type="EnsemblBacteria" id="CAA15261">
    <property type="protein sequence ID" value="CAA15261"/>
    <property type="gene ID" value="CAA15261"/>
</dbReference>
<dbReference type="KEGG" id="rpr:RP836"/>
<dbReference type="PATRIC" id="fig|272947.5.peg.873"/>
<dbReference type="eggNOG" id="COG0629">
    <property type="taxonomic scope" value="Bacteria"/>
</dbReference>
<dbReference type="HOGENOM" id="CLU_078758_0_2_5"/>
<dbReference type="OrthoDB" id="9809878at2"/>
<dbReference type="Proteomes" id="UP000002480">
    <property type="component" value="Chromosome"/>
</dbReference>
<dbReference type="GO" id="GO:0009295">
    <property type="term" value="C:nucleoid"/>
    <property type="evidence" value="ECO:0007669"/>
    <property type="project" value="TreeGrafter"/>
</dbReference>
<dbReference type="GO" id="GO:0003697">
    <property type="term" value="F:single-stranded DNA binding"/>
    <property type="evidence" value="ECO:0007669"/>
    <property type="project" value="UniProtKB-UniRule"/>
</dbReference>
<dbReference type="GO" id="GO:0006310">
    <property type="term" value="P:DNA recombination"/>
    <property type="evidence" value="ECO:0007669"/>
    <property type="project" value="UniProtKB-UniRule"/>
</dbReference>
<dbReference type="GO" id="GO:0006281">
    <property type="term" value="P:DNA repair"/>
    <property type="evidence" value="ECO:0007669"/>
    <property type="project" value="UniProtKB-UniRule"/>
</dbReference>
<dbReference type="GO" id="GO:0006260">
    <property type="term" value="P:DNA replication"/>
    <property type="evidence" value="ECO:0007669"/>
    <property type="project" value="UniProtKB-UniRule"/>
</dbReference>
<dbReference type="CDD" id="cd04496">
    <property type="entry name" value="SSB_OBF"/>
    <property type="match status" value="1"/>
</dbReference>
<dbReference type="Gene3D" id="2.40.50.140">
    <property type="entry name" value="Nucleic acid-binding proteins"/>
    <property type="match status" value="1"/>
</dbReference>
<dbReference type="HAMAP" id="MF_00984">
    <property type="entry name" value="SSB"/>
    <property type="match status" value="1"/>
</dbReference>
<dbReference type="InterPro" id="IPR012340">
    <property type="entry name" value="NA-bd_OB-fold"/>
</dbReference>
<dbReference type="InterPro" id="IPR000424">
    <property type="entry name" value="Primosome_PriB/ssb"/>
</dbReference>
<dbReference type="InterPro" id="IPR011344">
    <property type="entry name" value="ssDNA-bd"/>
</dbReference>
<dbReference type="NCBIfam" id="NF005170">
    <property type="entry name" value="PRK06642.1"/>
    <property type="match status" value="1"/>
</dbReference>
<dbReference type="NCBIfam" id="TIGR00621">
    <property type="entry name" value="ssb"/>
    <property type="match status" value="1"/>
</dbReference>
<dbReference type="PANTHER" id="PTHR10302">
    <property type="entry name" value="SINGLE-STRANDED DNA-BINDING PROTEIN"/>
    <property type="match status" value="1"/>
</dbReference>
<dbReference type="PANTHER" id="PTHR10302:SF27">
    <property type="entry name" value="SINGLE-STRANDED DNA-BINDING PROTEIN"/>
    <property type="match status" value="1"/>
</dbReference>
<dbReference type="Pfam" id="PF00436">
    <property type="entry name" value="SSB"/>
    <property type="match status" value="1"/>
</dbReference>
<dbReference type="PIRSF" id="PIRSF002070">
    <property type="entry name" value="SSB"/>
    <property type="match status" value="1"/>
</dbReference>
<dbReference type="SUPFAM" id="SSF50249">
    <property type="entry name" value="Nucleic acid-binding proteins"/>
    <property type="match status" value="1"/>
</dbReference>
<dbReference type="PROSITE" id="PS50935">
    <property type="entry name" value="SSB"/>
    <property type="match status" value="1"/>
</dbReference>
<feature type="chain" id="PRO_0000096089" description="Single-stranded DNA-binding protein">
    <location>
        <begin position="1"/>
        <end position="152"/>
    </location>
</feature>
<feature type="domain" description="SSB" evidence="1">
    <location>
        <begin position="5"/>
        <end position="111"/>
    </location>
</feature>
<feature type="DNA-binding region" evidence="1">
    <location>
        <begin position="54"/>
        <end position="60"/>
    </location>
</feature>
<feature type="region of interest" description="Disordered" evidence="2">
    <location>
        <begin position="118"/>
        <end position="152"/>
    </location>
</feature>
<feature type="short sequence motif" description="Important for interaction with partner proteins" evidence="1">
    <location>
        <begin position="147"/>
        <end position="152"/>
    </location>
</feature>
<feature type="compositionally biased region" description="Basic and acidic residues" evidence="2">
    <location>
        <begin position="127"/>
        <end position="144"/>
    </location>
</feature>
<keyword id="KW-0227">DNA damage</keyword>
<keyword id="KW-0233">DNA recombination</keyword>
<keyword id="KW-0234">DNA repair</keyword>
<keyword id="KW-0235">DNA replication</keyword>
<keyword id="KW-0238">DNA-binding</keyword>
<keyword id="KW-1185">Reference proteome</keyword>
<reference key="1">
    <citation type="journal article" date="1998" name="Nature">
        <title>The genome sequence of Rickettsia prowazekii and the origin of mitochondria.</title>
        <authorList>
            <person name="Andersson S.G.E."/>
            <person name="Zomorodipour A."/>
            <person name="Andersson J.O."/>
            <person name="Sicheritz-Ponten T."/>
            <person name="Alsmark U.C.M."/>
            <person name="Podowski R.M."/>
            <person name="Naeslund A.K."/>
            <person name="Eriksson A.-S."/>
            <person name="Winkler H.H."/>
            <person name="Kurland C.G."/>
        </authorList>
    </citation>
    <scope>NUCLEOTIDE SEQUENCE [LARGE SCALE GENOMIC DNA]</scope>
    <source>
        <strain>Madrid E</strain>
    </source>
</reference>
<gene>
    <name type="primary">ssb</name>
    <name type="ordered locus">RP836</name>
</gene>
<name>SSB_RICPR</name>
<accession>Q9ZCC2</accession>
<protein>
    <recommendedName>
        <fullName evidence="1">Single-stranded DNA-binding protein</fullName>
        <shortName evidence="1">SSB</shortName>
    </recommendedName>
</protein>
<proteinExistence type="inferred from homology"/>
<organism>
    <name type="scientific">Rickettsia prowazekii (strain Madrid E)</name>
    <dbReference type="NCBI Taxonomy" id="272947"/>
    <lineage>
        <taxon>Bacteria</taxon>
        <taxon>Pseudomonadati</taxon>
        <taxon>Pseudomonadota</taxon>
        <taxon>Alphaproteobacteria</taxon>
        <taxon>Rickettsiales</taxon>
        <taxon>Rickettsiaceae</taxon>
        <taxon>Rickettsieae</taxon>
        <taxon>Rickettsia</taxon>
        <taxon>typhus group</taxon>
    </lineage>
</organism>
<evidence type="ECO:0000255" key="1">
    <source>
        <dbReference type="HAMAP-Rule" id="MF_00984"/>
    </source>
</evidence>
<evidence type="ECO:0000256" key="2">
    <source>
        <dbReference type="SAM" id="MobiDB-lite"/>
    </source>
</evidence>
<sequence length="152" mass="17477">MAGSLNKVILIGNVGRDPEIRTTGEGKKIINLSLATTETWKDRITSERKERTEWHRVVIFSEGLVSIVERYVTKGSKLYIEGSLQTRKWNDNSGQEKYTTEVVLQNFNSQLILLDHKNSNQNTQGSGHHEYKYPETKNHSFDHSDLDDEIPF</sequence>